<organism>
    <name type="scientific">Bos taurus</name>
    <name type="common">Bovine</name>
    <dbReference type="NCBI Taxonomy" id="9913"/>
    <lineage>
        <taxon>Eukaryota</taxon>
        <taxon>Metazoa</taxon>
        <taxon>Chordata</taxon>
        <taxon>Craniata</taxon>
        <taxon>Vertebrata</taxon>
        <taxon>Euteleostomi</taxon>
        <taxon>Mammalia</taxon>
        <taxon>Eutheria</taxon>
        <taxon>Laurasiatheria</taxon>
        <taxon>Artiodactyla</taxon>
        <taxon>Ruminantia</taxon>
        <taxon>Pecora</taxon>
        <taxon>Bovidae</taxon>
        <taxon>Bovinae</taxon>
        <taxon>Bos</taxon>
    </lineage>
</organism>
<name>MYF6_BOVIN</name>
<comment type="function">
    <text evidence="1">Involved in muscle differentiation (myogenic factor). Induces fibroblasts to differentiate into myoblasts. Probable sequence specific DNA-binding protein (By similarity).</text>
</comment>
<comment type="subunit">
    <text evidence="1 2">Efficient DNA binding requires dimerization with another bHLH protein. Interacts with CSRP3.</text>
</comment>
<comment type="subcellular location">
    <subcellularLocation>
        <location evidence="3">Nucleus</location>
    </subcellularLocation>
</comment>
<proteinExistence type="evidence at transcript level"/>
<accession>Q7YS80</accession>
<accession>A5PJL5</accession>
<keyword id="KW-0217">Developmental protein</keyword>
<keyword id="KW-0221">Differentiation</keyword>
<keyword id="KW-0238">DNA-binding</keyword>
<keyword id="KW-0517">Myogenesis</keyword>
<keyword id="KW-0539">Nucleus</keyword>
<keyword id="KW-1185">Reference proteome</keyword>
<evidence type="ECO:0000250" key="1"/>
<evidence type="ECO:0000250" key="2">
    <source>
        <dbReference type="UniProtKB" id="P19335"/>
    </source>
</evidence>
<evidence type="ECO:0000255" key="3">
    <source>
        <dbReference type="PROSITE-ProRule" id="PRU00981"/>
    </source>
</evidence>
<evidence type="ECO:0000256" key="4">
    <source>
        <dbReference type="SAM" id="MobiDB-lite"/>
    </source>
</evidence>
<feature type="chain" id="PRO_0000127350" description="Myogenic factor 6">
    <location>
        <begin position="1"/>
        <end position="242"/>
    </location>
</feature>
<feature type="domain" description="bHLH" evidence="3">
    <location>
        <begin position="93"/>
        <end position="144"/>
    </location>
</feature>
<feature type="region of interest" description="Disordered" evidence="4">
    <location>
        <begin position="31"/>
        <end position="63"/>
    </location>
</feature>
<protein>
    <recommendedName>
        <fullName>Myogenic factor 6</fullName>
        <shortName>Myf-6</shortName>
    </recommendedName>
    <alternativeName>
        <fullName>Muscle-specific regulatory factor 4</fullName>
    </alternativeName>
</protein>
<sequence>MMMDLFETGSYFFYLDGENVTLQPLEVAEGSPLYPGSDGTLSPCQDQMPPEAGSDSSGEEHVLAPPGLQPPHCPGQCLIWACKTCKRKSAPTDRRKAATLRERRRLKKINEAFEALKRRTVANPNQRLPKVEILRSAINYIERLQDLLHRLDQQDKMQELGVDPFSYRPKQENLEGADFLRTCSSQWPSVSDHSRGLVITAKEGGTSIDSSASSSLRCLSSIVDSISSEEHKLPCVEEVVEK</sequence>
<dbReference type="EMBL" id="AB110601">
    <property type="protein sequence ID" value="BAC76804.1"/>
    <property type="molecule type" value="mRNA"/>
</dbReference>
<dbReference type="EMBL" id="BC142159">
    <property type="protein sequence ID" value="AAI42160.1"/>
    <property type="molecule type" value="mRNA"/>
</dbReference>
<dbReference type="RefSeq" id="NP_861527.1">
    <property type="nucleotide sequence ID" value="NM_181811.2"/>
</dbReference>
<dbReference type="SMR" id="Q7YS80"/>
<dbReference type="FunCoup" id="Q7YS80">
    <property type="interactions" value="10"/>
</dbReference>
<dbReference type="STRING" id="9913.ENSBTAP00000066173"/>
<dbReference type="PaxDb" id="9913-ENSBTAP00000018607"/>
<dbReference type="Ensembl" id="ENSBTAT00000018607.5">
    <property type="protein sequence ID" value="ENSBTAP00000018607.3"/>
    <property type="gene ID" value="ENSBTAG00000014003.5"/>
</dbReference>
<dbReference type="GeneID" id="281336"/>
<dbReference type="KEGG" id="bta:281336"/>
<dbReference type="CTD" id="4618"/>
<dbReference type="VEuPathDB" id="HostDB:ENSBTAG00000014003"/>
<dbReference type="VGNC" id="VGNC:31793">
    <property type="gene designation" value="MYF6"/>
</dbReference>
<dbReference type="eggNOG" id="KOG3960">
    <property type="taxonomic scope" value="Eukaryota"/>
</dbReference>
<dbReference type="GeneTree" id="ENSGT00950000182959"/>
<dbReference type="HOGENOM" id="CLU_100258_0_0_1"/>
<dbReference type="InParanoid" id="Q7YS80"/>
<dbReference type="OMA" id="SPCQDQI"/>
<dbReference type="OrthoDB" id="10049614at2759"/>
<dbReference type="TreeFam" id="TF316344"/>
<dbReference type="Reactome" id="R-BTA-525793">
    <property type="pathway name" value="Myogenesis"/>
</dbReference>
<dbReference type="Proteomes" id="UP000009136">
    <property type="component" value="Chromosome 5"/>
</dbReference>
<dbReference type="Bgee" id="ENSBTAG00000014003">
    <property type="expression patterns" value="Expressed in gluteus medius and 53 other cell types or tissues"/>
</dbReference>
<dbReference type="GO" id="GO:0005634">
    <property type="term" value="C:nucleus"/>
    <property type="evidence" value="ECO:0007669"/>
    <property type="project" value="UniProtKB-SubCell"/>
</dbReference>
<dbReference type="GO" id="GO:0000981">
    <property type="term" value="F:DNA-binding transcription factor activity, RNA polymerase II-specific"/>
    <property type="evidence" value="ECO:0000318"/>
    <property type="project" value="GO_Central"/>
</dbReference>
<dbReference type="GO" id="GO:0046983">
    <property type="term" value="F:protein dimerization activity"/>
    <property type="evidence" value="ECO:0007669"/>
    <property type="project" value="InterPro"/>
</dbReference>
<dbReference type="GO" id="GO:0000978">
    <property type="term" value="F:RNA polymerase II cis-regulatory region sequence-specific DNA binding"/>
    <property type="evidence" value="ECO:0000318"/>
    <property type="project" value="GO_Central"/>
</dbReference>
<dbReference type="GO" id="GO:0045663">
    <property type="term" value="P:positive regulation of myoblast differentiation"/>
    <property type="evidence" value="ECO:0000318"/>
    <property type="project" value="GO_Central"/>
</dbReference>
<dbReference type="GO" id="GO:0048743">
    <property type="term" value="P:positive regulation of skeletal muscle fiber development"/>
    <property type="evidence" value="ECO:0000318"/>
    <property type="project" value="GO_Central"/>
</dbReference>
<dbReference type="GO" id="GO:0006357">
    <property type="term" value="P:regulation of transcription by RNA polymerase II"/>
    <property type="evidence" value="ECO:0000318"/>
    <property type="project" value="GO_Central"/>
</dbReference>
<dbReference type="GO" id="GO:0035914">
    <property type="term" value="P:skeletal muscle cell differentiation"/>
    <property type="evidence" value="ECO:0000318"/>
    <property type="project" value="GO_Central"/>
</dbReference>
<dbReference type="CDD" id="cd18934">
    <property type="entry name" value="bHLH_TS_MRF4_Myf6"/>
    <property type="match status" value="1"/>
</dbReference>
<dbReference type="FunFam" id="4.10.280.10:FF:000005">
    <property type="entry name" value="Myogenic factor"/>
    <property type="match status" value="1"/>
</dbReference>
<dbReference type="Gene3D" id="4.10.280.10">
    <property type="entry name" value="Helix-loop-helix DNA-binding domain"/>
    <property type="match status" value="1"/>
</dbReference>
<dbReference type="InterPro" id="IPR011598">
    <property type="entry name" value="bHLH_dom"/>
</dbReference>
<dbReference type="InterPro" id="IPR036638">
    <property type="entry name" value="HLH_DNA-bd_sf"/>
</dbReference>
<dbReference type="InterPro" id="IPR002546">
    <property type="entry name" value="MyoD_N"/>
</dbReference>
<dbReference type="InterPro" id="IPR039704">
    <property type="entry name" value="Myogenic_factor"/>
</dbReference>
<dbReference type="PANTHER" id="PTHR11534">
    <property type="entry name" value="MYOGENIC FACTOR"/>
    <property type="match status" value="1"/>
</dbReference>
<dbReference type="PANTHER" id="PTHR11534:SF4">
    <property type="entry name" value="MYOGENIC FACTOR 6"/>
    <property type="match status" value="1"/>
</dbReference>
<dbReference type="Pfam" id="PF01586">
    <property type="entry name" value="Basic"/>
    <property type="match status" value="1"/>
</dbReference>
<dbReference type="Pfam" id="PF00010">
    <property type="entry name" value="HLH"/>
    <property type="match status" value="1"/>
</dbReference>
<dbReference type="SMART" id="SM00520">
    <property type="entry name" value="BASIC"/>
    <property type="match status" value="1"/>
</dbReference>
<dbReference type="SMART" id="SM00353">
    <property type="entry name" value="HLH"/>
    <property type="match status" value="1"/>
</dbReference>
<dbReference type="SUPFAM" id="SSF47459">
    <property type="entry name" value="HLH, helix-loop-helix DNA-binding domain"/>
    <property type="match status" value="1"/>
</dbReference>
<dbReference type="PROSITE" id="PS50888">
    <property type="entry name" value="BHLH"/>
    <property type="match status" value="1"/>
</dbReference>
<reference key="1">
    <citation type="submission" date="2003-05" db="EMBL/GenBank/DDBJ databases">
        <title>Effect of myogenic regulatory factor siRNAs on differentiation of bovine skeletal muscle cells.</title>
        <authorList>
            <person name="Muroya S."/>
            <person name="Nakajima I."/>
            <person name="Chikuni K."/>
        </authorList>
    </citation>
    <scope>NUCLEOTIDE SEQUENCE [MRNA]</scope>
    <source>
        <tissue>Skeletal muscle</tissue>
    </source>
</reference>
<reference key="2">
    <citation type="submission" date="2007-06" db="EMBL/GenBank/DDBJ databases">
        <authorList>
            <consortium name="NIH - Mammalian Gene Collection (MGC) project"/>
        </authorList>
    </citation>
    <scope>NUCLEOTIDE SEQUENCE [LARGE SCALE MRNA]</scope>
    <source>
        <strain>Hereford</strain>
        <tissue>Fetal muscle</tissue>
    </source>
</reference>
<gene>
    <name type="primary">MYF6</name>
    <name type="synonym">MRF4</name>
</gene>